<sequence>MITVNEKEHILEQKYRPSTIDECILPAFDKETFKSITSKGKIPHIILHSPSPGTGKTTVAKALCHDVNADMMFVNGSDCKIDFVRGPLTNFASAASFDGRQKVIVIDEFDRSGLAESQRHLRSFMEAYSSNCSIIITANNIDGIIKPLQSRCRVITFGQPTDEDKIEMMKQMIRRLTEICKHEGIAIADMKVVAALVKKNFPDFRKTIGELDSYSSKGVLDAGILSLVTNDRGAIDDVLESLKNKDVKQLRALAPKYAADYSWFVGKLAEEIYSRVTPQSIIRMYEIVGENNQYHGIAANTELHLAYLFIQLACEMQWK</sequence>
<comment type="function">
    <text evidence="1 2 3 5 6">Forms the sliding-clamp-loader together with the small subunit (PubMed:10585481). Functions as an ATPase enzyme (PubMed:16800623, PubMed:18676368). The clamp loader holds the clamp in an open conformation and places it onto the DNA (PubMed:18676368, PubMed:22194570). 4 ATP molecules must bind to the sliding-clamp-loader before the latter can open the sliding clamp (PubMed:18676368). ATP hydrolysis triggers the detachment of the sliding clamp from the sliding-clamp-loader, freeing the sliding clamp to track along DNA (PubMed:18676368, PubMed:22194570).</text>
</comment>
<comment type="subunit">
    <text evidence="1 2 4 6 7 8">The sliding-clamp-loader consists of 4 large subunits and 1 small subunit (PubMed:10585481, PubMed:2663867). Interacts with the sliding clamp; this interaction allows the sliding-clamp-loader to open the sliding clamp (PubMed:22194570, PubMed:9395509). Part of the replicase complex that includes the DNA polymerase, the polymerase clamp, the clamp loader complex, the single-stranded DNA binding protein, the primase, the helicase and the helicase assembly factor (PubMed:16800624).</text>
</comment>
<comment type="similarity">
    <text evidence="1">Belongs to the Tevenvirinae sliding-clamp-loader large subunit family.</text>
</comment>
<organism>
    <name type="scientific">Enterobacteria phage T4</name>
    <name type="common">Bacteriophage T4</name>
    <dbReference type="NCBI Taxonomy" id="10665"/>
    <lineage>
        <taxon>Viruses</taxon>
        <taxon>Duplodnaviria</taxon>
        <taxon>Heunggongvirae</taxon>
        <taxon>Uroviricota</taxon>
        <taxon>Caudoviricetes</taxon>
        <taxon>Straboviridae</taxon>
        <taxon>Tevenvirinae</taxon>
        <taxon>Tequatrovirus</taxon>
    </lineage>
</organism>
<accession>P04526</accession>
<feature type="chain" id="PRO_0000164927" description="Sliding-clamp-loader large subunit">
    <location>
        <begin position="1"/>
        <end position="319"/>
    </location>
</feature>
<feature type="binding site" evidence="1 6">
    <location>
        <begin position="12"/>
        <end position="15"/>
    </location>
    <ligand>
        <name>ATP</name>
        <dbReference type="ChEBI" id="CHEBI:30616"/>
    </ligand>
</feature>
<feature type="binding site" evidence="1 6">
    <location>
        <position position="24"/>
    </location>
    <ligand>
        <name>ATP</name>
        <dbReference type="ChEBI" id="CHEBI:30616"/>
    </ligand>
</feature>
<feature type="binding site" evidence="1 6">
    <location>
        <begin position="53"/>
        <end position="58"/>
    </location>
    <ligand>
        <name>ATP</name>
        <dbReference type="ChEBI" id="CHEBI:30616"/>
    </ligand>
</feature>
<feature type="binding site" evidence="1 6">
    <location>
        <position position="205"/>
    </location>
    <ligand>
        <name>ATP</name>
        <dbReference type="ChEBI" id="CHEBI:30616"/>
    </ligand>
</feature>
<feature type="sequence conflict" description="In Ref. 2; CAA25341." evidence="9" ref="2">
    <original>C</original>
    <variation>S</variation>
    <location>
        <position position="132"/>
    </location>
</feature>
<feature type="sequence conflict" description="In Ref. 2; CAA25341." evidence="9" ref="2">
    <original>R</original>
    <variation>G</variation>
    <location>
        <position position="175"/>
    </location>
</feature>
<feature type="sequence conflict" description="In Ref. 2; CAA25341." evidence="9" ref="2">
    <original>S</original>
    <variation>T</variation>
    <location>
        <position position="213"/>
    </location>
</feature>
<feature type="sequence conflict" description="In Ref. 2; CAA25341." evidence="9" ref="2">
    <original>R</original>
    <variation>A</variation>
    <location>
        <position position="275"/>
    </location>
</feature>
<feature type="helix" evidence="13">
    <location>
        <begin position="11"/>
        <end position="14"/>
    </location>
</feature>
<feature type="turn" evidence="13">
    <location>
        <begin position="20"/>
        <end position="22"/>
    </location>
</feature>
<feature type="helix" evidence="13">
    <location>
        <begin position="27"/>
        <end position="39"/>
    </location>
</feature>
<feature type="strand" evidence="13">
    <location>
        <begin position="45"/>
        <end position="48"/>
    </location>
</feature>
<feature type="strand" evidence="13">
    <location>
        <begin position="50"/>
        <end position="55"/>
    </location>
</feature>
<feature type="helix" evidence="13">
    <location>
        <begin position="56"/>
        <end position="67"/>
    </location>
</feature>
<feature type="strand" evidence="13">
    <location>
        <begin position="70"/>
        <end position="75"/>
    </location>
</feature>
<feature type="helix" evidence="13">
    <location>
        <begin position="76"/>
        <end position="78"/>
    </location>
</feature>
<feature type="helix" evidence="13">
    <location>
        <begin position="81"/>
        <end position="85"/>
    </location>
</feature>
<feature type="helix" evidence="13">
    <location>
        <begin position="87"/>
        <end position="93"/>
    </location>
</feature>
<feature type="strand" evidence="13">
    <location>
        <begin position="102"/>
        <end position="108"/>
    </location>
</feature>
<feature type="helix" evidence="13">
    <location>
        <begin position="112"/>
        <end position="114"/>
    </location>
</feature>
<feature type="helix" evidence="13">
    <location>
        <begin position="115"/>
        <end position="125"/>
    </location>
</feature>
<feature type="turn" evidence="13">
    <location>
        <begin position="129"/>
        <end position="131"/>
    </location>
</feature>
<feature type="strand" evidence="13">
    <location>
        <begin position="132"/>
        <end position="139"/>
    </location>
</feature>
<feature type="helix" evidence="13">
    <location>
        <begin position="141"/>
        <end position="143"/>
    </location>
</feature>
<feature type="helix" evidence="13">
    <location>
        <begin position="146"/>
        <end position="151"/>
    </location>
</feature>
<feature type="strand" evidence="13">
    <location>
        <begin position="152"/>
        <end position="156"/>
    </location>
</feature>
<feature type="helix" evidence="13">
    <location>
        <begin position="162"/>
        <end position="183"/>
    </location>
</feature>
<feature type="strand" evidence="13">
    <location>
        <begin position="186"/>
        <end position="188"/>
    </location>
</feature>
<feature type="helix" evidence="13">
    <location>
        <begin position="191"/>
        <end position="199"/>
    </location>
</feature>
<feature type="turn" evidence="15">
    <location>
        <begin position="200"/>
        <end position="202"/>
    </location>
</feature>
<feature type="helix" evidence="13">
    <location>
        <begin position="204"/>
        <end position="214"/>
    </location>
</feature>
<feature type="turn" evidence="13">
    <location>
        <begin position="215"/>
        <end position="217"/>
    </location>
</feature>
<feature type="strand" evidence="13">
    <location>
        <begin position="218"/>
        <end position="220"/>
    </location>
</feature>
<feature type="helix" evidence="13">
    <location>
        <begin position="222"/>
        <end position="228"/>
    </location>
</feature>
<feature type="turn" evidence="14">
    <location>
        <begin position="231"/>
        <end position="233"/>
    </location>
</feature>
<feature type="helix" evidence="13">
    <location>
        <begin position="236"/>
        <end position="244"/>
    </location>
</feature>
<feature type="helix" evidence="13">
    <location>
        <begin position="247"/>
        <end position="257"/>
    </location>
</feature>
<feature type="helix" evidence="15">
    <location>
        <begin position="258"/>
        <end position="260"/>
    </location>
</feature>
<feature type="helix" evidence="13">
    <location>
        <begin position="261"/>
        <end position="273"/>
    </location>
</feature>
<feature type="helix" evidence="13">
    <location>
        <begin position="278"/>
        <end position="293"/>
    </location>
</feature>
<feature type="turn" evidence="13">
    <location>
        <begin position="294"/>
        <end position="297"/>
    </location>
</feature>
<feature type="helix" evidence="13">
    <location>
        <begin position="301"/>
        <end position="315"/>
    </location>
</feature>
<reference key="1">
    <citation type="journal article" date="1984" name="J. Biol. Chem.">
        <title>Bacteriophage T4 gene 44 DNA polymerase accessory protein. Sequences of gene 44 and its protein product.</title>
        <authorList>
            <person name="Spicer E.K."/>
            <person name="Nossal N.G."/>
            <person name="Williams K.R."/>
        </authorList>
    </citation>
    <scope>NUCLEOTIDE SEQUENCE [GENOMIC DNA]</scope>
</reference>
<reference key="2">
    <citation type="journal article" date="1984" name="Nucleic Acids Res.">
        <title>The bacteriophage T4 regA gene: primary sequence of a translational repressor.</title>
        <authorList>
            <person name="Trojanowska M."/>
            <person name="Miller E.S."/>
            <person name="Karam J."/>
            <person name="Stormo G."/>
            <person name="Gold L."/>
        </authorList>
    </citation>
    <scope>NUCLEOTIDE SEQUENCE [GENOMIC DNA]</scope>
</reference>
<reference key="3">
    <citation type="journal article" date="2003" name="Microbiol. Mol. Biol. Rev.">
        <title>Bacteriophage T4 genome.</title>
        <authorList>
            <person name="Miller E.S."/>
            <person name="Kutter E."/>
            <person name="Mosig G."/>
            <person name="Arisaka F."/>
            <person name="Kunisawa T."/>
            <person name="Ruger W."/>
        </authorList>
    </citation>
    <scope>NUCLEOTIDE SEQUENCE [LARGE SCALE GENOMIC DNA]</scope>
</reference>
<reference key="4">
    <citation type="journal article" date="1989" name="J. Biol. Chem.">
        <title>Structural and enzymatic studies of the T4 DNA replication system. I. Physical characterization of the polymerase accessory protein complex.</title>
        <authorList>
            <person name="Jarvis T.C."/>
            <person name="Paul L.S."/>
            <person name="von Hippel P.H."/>
        </authorList>
    </citation>
    <scope>SUBUNIT</scope>
</reference>
<reference key="5">
    <citation type="journal article" date="1997" name="J. Biol. Chem.">
        <title>Structural analyses of gp45 sliding clamp interactions during assembly of the bacteriophage T4 DNA polymerase holoenzyme. II. The Gp44/62 clamp loader interacts with a single defined face of the sliding clamp ring.</title>
        <authorList>
            <person name="Latham G.J."/>
            <person name="Bacheller D.J."/>
            <person name="Pietroni P."/>
            <person name="von Hippel P.H."/>
        </authorList>
    </citation>
    <scope>INTERACTION WITH THE SLIDING CLAMP</scope>
</reference>
<reference key="6">
    <citation type="journal article" date="1999" name="J. Biol. Chem.">
        <title>In vitro reconstitution of the bacteriophage T4 clamp loader complex (gp44/62).</title>
        <authorList>
            <person name="Janzen D.M."/>
            <person name="Torgov M.Y."/>
            <person name="Reddy M.K."/>
        </authorList>
    </citation>
    <scope>SUBUNIT</scope>
    <scope>FUNCTION</scope>
</reference>
<reference key="7">
    <citation type="journal article" date="2006" name="Biochemistry">
        <title>An alternative clamp loading pathway via the T4 clamp loader gp44/62-DNA complex.</title>
        <authorList>
            <person name="Zhuang Z."/>
            <person name="Berdis A.J."/>
            <person name="Benkovic S.J."/>
        </authorList>
    </citation>
    <scope>FUNCTION</scope>
    <scope>DNA-BINDING</scope>
</reference>
<reference key="8">
    <citation type="journal article" date="2006" name="Biochemistry">
        <title>Single-molecule investigation of the T4 bacteriophage DNA polymerase holoenzyme: multiple pathways of holoenzyme formation.</title>
        <authorList>
            <person name="Smiley R.D."/>
            <person name="Zhuang Z."/>
            <person name="Benkovic S.J."/>
            <person name="Hammes G.G."/>
        </authorList>
    </citation>
    <scope>IDENTIFICATION IN THE REPLICASE COMPLEX</scope>
</reference>
<reference key="9">
    <citation type="journal article" date="2008" name="J. Biol. Chem.">
        <title>Multiple ATP binding is required to stabilize the 'activated' (clamp open) clamp loader of the T4 DNA replication complex.</title>
        <authorList>
            <person name="Pietroni P."/>
            <person name="von Hippel P.H."/>
        </authorList>
    </citation>
    <scope>FUNCTION</scope>
    <scope>CATALYTIC ACTIVITY</scope>
</reference>
<reference evidence="10 11 12" key="10">
    <citation type="journal article" date="2011" name="Science">
        <title>How a DNA polymerase clamp loader opens a sliding clamp.</title>
        <authorList>
            <person name="Kelch B.A."/>
            <person name="Makino D.L."/>
            <person name="O'Donnell M."/>
            <person name="Kuriyan J."/>
        </authorList>
    </citation>
    <scope>X-RAY CRYSTALLOGRAPHY (3.5 ANGSTROMS)</scope>
    <scope>FUNCTION</scope>
    <scope>INTERACTION WITH THE SLIDING CLAMP</scope>
</reference>
<dbReference type="EC" id="3.6.4.-" evidence="1 5"/>
<dbReference type="EMBL" id="X00769">
    <property type="protein sequence ID" value="CAA25341.1"/>
    <property type="molecule type" value="Genomic_DNA"/>
</dbReference>
<dbReference type="EMBL" id="M10160">
    <property type="protein sequence ID" value="AAC05394.1"/>
    <property type="molecule type" value="Genomic_DNA"/>
</dbReference>
<dbReference type="EMBL" id="AF158101">
    <property type="protein sequence ID" value="AAD42469.1"/>
    <property type="molecule type" value="Genomic_DNA"/>
</dbReference>
<dbReference type="PIR" id="A04302">
    <property type="entry name" value="IDBPA4"/>
</dbReference>
<dbReference type="RefSeq" id="NP_049665.1">
    <property type="nucleotide sequence ID" value="NC_000866.4"/>
</dbReference>
<dbReference type="PDB" id="3U5Z">
    <property type="method" value="X-ray"/>
    <property type="resolution" value="3.50 A"/>
    <property type="chains" value="B/C/D/E/L/M/N/O=1-319"/>
</dbReference>
<dbReference type="PDB" id="3U60">
    <property type="method" value="X-ray"/>
    <property type="resolution" value="3.34 A"/>
    <property type="chains" value="B/C/D/E=1-319"/>
</dbReference>
<dbReference type="PDB" id="3U61">
    <property type="method" value="X-ray"/>
    <property type="resolution" value="3.20 A"/>
    <property type="chains" value="B/C/D/E=1-319"/>
</dbReference>
<dbReference type="PDB" id="8UH7">
    <property type="method" value="X-ray"/>
    <property type="resolution" value="2.63 A"/>
    <property type="chains" value="B/C/D/E=1-319"/>
</dbReference>
<dbReference type="PDB" id="8UK9">
    <property type="method" value="X-ray"/>
    <property type="resolution" value="3.10 A"/>
    <property type="chains" value="B/C/D/E/K/L/M/N=1-319"/>
</dbReference>
<dbReference type="PDB" id="8UNF">
    <property type="method" value="EM"/>
    <property type="resolution" value="3.15 A"/>
    <property type="chains" value="B/C/D/E=1-319"/>
</dbReference>
<dbReference type="PDB" id="8UNH">
    <property type="method" value="EM"/>
    <property type="resolution" value="3.21 A"/>
    <property type="chains" value="B/C/D/E=1-319"/>
</dbReference>
<dbReference type="PDBsum" id="3U5Z"/>
<dbReference type="PDBsum" id="3U60"/>
<dbReference type="PDBsum" id="3U61"/>
<dbReference type="PDBsum" id="8UH7"/>
<dbReference type="PDBsum" id="8UK9"/>
<dbReference type="PDBsum" id="8UNF"/>
<dbReference type="PDBsum" id="8UNH"/>
<dbReference type="EMDB" id="EMD-42399"/>
<dbReference type="EMDB" id="EMD-42402"/>
<dbReference type="SMR" id="P04526"/>
<dbReference type="BindingDB" id="P04526"/>
<dbReference type="GeneID" id="1258787"/>
<dbReference type="KEGG" id="vg:1258787"/>
<dbReference type="OrthoDB" id="4962at10239"/>
<dbReference type="EvolutionaryTrace" id="P04526"/>
<dbReference type="Proteomes" id="UP000009087">
    <property type="component" value="Segment"/>
</dbReference>
<dbReference type="GO" id="GO:0005524">
    <property type="term" value="F:ATP binding"/>
    <property type="evidence" value="ECO:0007669"/>
    <property type="project" value="UniProtKB-UniRule"/>
</dbReference>
<dbReference type="GO" id="GO:0016887">
    <property type="term" value="F:ATP hydrolysis activity"/>
    <property type="evidence" value="ECO:0000314"/>
    <property type="project" value="UniProtKB"/>
</dbReference>
<dbReference type="GO" id="GO:0003677">
    <property type="term" value="F:DNA binding"/>
    <property type="evidence" value="ECO:0007669"/>
    <property type="project" value="UniProtKB-UniRule"/>
</dbReference>
<dbReference type="GO" id="GO:0003689">
    <property type="term" value="F:DNA clamp loader activity"/>
    <property type="evidence" value="ECO:0000314"/>
    <property type="project" value="UniProtKB"/>
</dbReference>
<dbReference type="GO" id="GO:0039686">
    <property type="term" value="P:bidirectional double-stranded viral DNA replication"/>
    <property type="evidence" value="ECO:0000314"/>
    <property type="project" value="UniProtKB"/>
</dbReference>
<dbReference type="GO" id="GO:0006281">
    <property type="term" value="P:DNA repair"/>
    <property type="evidence" value="ECO:0007669"/>
    <property type="project" value="TreeGrafter"/>
</dbReference>
<dbReference type="GO" id="GO:0006261">
    <property type="term" value="P:DNA-templated DNA replication"/>
    <property type="evidence" value="ECO:0007669"/>
    <property type="project" value="TreeGrafter"/>
</dbReference>
<dbReference type="CDD" id="cd00009">
    <property type="entry name" value="AAA"/>
    <property type="match status" value="1"/>
</dbReference>
<dbReference type="Gene3D" id="1.10.8.60">
    <property type="match status" value="1"/>
</dbReference>
<dbReference type="Gene3D" id="1.20.272.10">
    <property type="match status" value="1"/>
</dbReference>
<dbReference type="Gene3D" id="3.40.50.300">
    <property type="entry name" value="P-loop containing nucleotide triphosphate hydrolases"/>
    <property type="match status" value="1"/>
</dbReference>
<dbReference type="HAMAP" id="MF_04162">
    <property type="entry name" value="T4_Clamp_Loader_L"/>
    <property type="match status" value="1"/>
</dbReference>
<dbReference type="InterPro" id="IPR003593">
    <property type="entry name" value="AAA+_ATPase"/>
</dbReference>
<dbReference type="InterPro" id="IPR003959">
    <property type="entry name" value="ATPase_AAA_core"/>
</dbReference>
<dbReference type="InterPro" id="IPR050238">
    <property type="entry name" value="DNA_Rep/Repair_Clamp_Loader"/>
</dbReference>
<dbReference type="InterPro" id="IPR048817">
    <property type="entry name" value="Gp44_C"/>
</dbReference>
<dbReference type="InterPro" id="IPR048815">
    <property type="entry name" value="Gp44_lid"/>
</dbReference>
<dbReference type="InterPro" id="IPR027417">
    <property type="entry name" value="P-loop_NTPase"/>
</dbReference>
<dbReference type="InterPro" id="IPR046388">
    <property type="entry name" value="T4_Clamp_Loader_L"/>
</dbReference>
<dbReference type="PANTHER" id="PTHR11669">
    <property type="entry name" value="REPLICATION FACTOR C / DNA POLYMERASE III GAMMA-TAU SUBUNIT"/>
    <property type="match status" value="1"/>
</dbReference>
<dbReference type="PANTHER" id="PTHR11669:SF20">
    <property type="entry name" value="REPLICATION FACTOR C SUBUNIT 4"/>
    <property type="match status" value="1"/>
</dbReference>
<dbReference type="Pfam" id="PF00004">
    <property type="entry name" value="AAA"/>
    <property type="match status" value="1"/>
</dbReference>
<dbReference type="Pfam" id="PF21429">
    <property type="entry name" value="Gp44_C"/>
    <property type="match status" value="1"/>
</dbReference>
<dbReference type="Pfam" id="PF21328">
    <property type="entry name" value="Gp44_lid"/>
    <property type="match status" value="1"/>
</dbReference>
<dbReference type="SMART" id="SM00382">
    <property type="entry name" value="AAA"/>
    <property type="match status" value="1"/>
</dbReference>
<dbReference type="SUPFAM" id="SSF52540">
    <property type="entry name" value="P-loop containing nucleoside triphosphate hydrolases"/>
    <property type="match status" value="1"/>
</dbReference>
<name>LOADL_BPT4</name>
<protein>
    <recommendedName>
        <fullName evidence="1">Sliding-clamp-loader large subunit</fullName>
        <ecNumber evidence="1 5">3.6.4.-</ecNumber>
    </recommendedName>
    <alternativeName>
        <fullName evidence="1">Clamp loader gp44 subunit</fullName>
    </alternativeName>
    <alternativeName>
        <fullName>Gene product 44</fullName>
        <shortName>gp44</shortName>
    </alternativeName>
</protein>
<keyword id="KW-0002">3D-structure</keyword>
<keyword id="KW-0067">ATP-binding</keyword>
<keyword id="KW-0235">DNA replication</keyword>
<keyword id="KW-0238">DNA-binding</keyword>
<keyword id="KW-0378">Hydrolase</keyword>
<keyword id="KW-0547">Nucleotide-binding</keyword>
<keyword id="KW-1185">Reference proteome</keyword>
<keyword id="KW-1194">Viral DNA replication</keyword>
<evidence type="ECO:0000255" key="1">
    <source>
        <dbReference type="HAMAP-Rule" id="MF_04162"/>
    </source>
</evidence>
<evidence type="ECO:0000269" key="2">
    <source>
    </source>
</evidence>
<evidence type="ECO:0000269" key="3">
    <source>
    </source>
</evidence>
<evidence type="ECO:0000269" key="4">
    <source>
    </source>
</evidence>
<evidence type="ECO:0000269" key="5">
    <source>
    </source>
</evidence>
<evidence type="ECO:0000269" key="6">
    <source>
    </source>
</evidence>
<evidence type="ECO:0000269" key="7">
    <source>
    </source>
</evidence>
<evidence type="ECO:0000269" key="8">
    <source>
    </source>
</evidence>
<evidence type="ECO:0000305" key="9"/>
<evidence type="ECO:0007744" key="10">
    <source>
        <dbReference type="PDB" id="3U5Z"/>
    </source>
</evidence>
<evidence type="ECO:0007744" key="11">
    <source>
        <dbReference type="PDB" id="3U60"/>
    </source>
</evidence>
<evidence type="ECO:0007744" key="12">
    <source>
        <dbReference type="PDB" id="3U61"/>
    </source>
</evidence>
<evidence type="ECO:0007829" key="13">
    <source>
        <dbReference type="PDB" id="8UH7"/>
    </source>
</evidence>
<evidence type="ECO:0007829" key="14">
    <source>
        <dbReference type="PDB" id="8UNF"/>
    </source>
</evidence>
<evidence type="ECO:0007829" key="15">
    <source>
        <dbReference type="PDB" id="8UNH"/>
    </source>
</evidence>
<organismHost>
    <name type="scientific">Escherichia coli</name>
    <dbReference type="NCBI Taxonomy" id="562"/>
</organismHost>
<proteinExistence type="evidence at protein level"/>
<gene>
    <name type="primary">44</name>
</gene>